<reference key="1">
    <citation type="submission" date="2007-11" db="EMBL/GenBank/DDBJ databases">
        <title>Genome sequencing of phylogenetically and phenotypically diverse Coxiella burnetii isolates.</title>
        <authorList>
            <person name="Seshadri R."/>
            <person name="Samuel J.E."/>
        </authorList>
    </citation>
    <scope>NUCLEOTIDE SEQUENCE [LARGE SCALE GENOMIC DNA]</scope>
    <source>
        <strain>RSA 331 / Henzerling II</strain>
    </source>
</reference>
<accession>A9N9I1</accession>
<proteinExistence type="inferred from homology"/>
<gene>
    <name evidence="1" type="primary">apaH</name>
    <name type="ordered locus">COXBURSA331_A0097</name>
</gene>
<protein>
    <recommendedName>
        <fullName evidence="1">Bis(5'-nucleosyl)-tetraphosphatase, symmetrical</fullName>
        <ecNumber evidence="1">3.6.1.41</ecNumber>
    </recommendedName>
    <alternativeName>
        <fullName evidence="1">Ap4A hydrolase</fullName>
    </alternativeName>
    <alternativeName>
        <fullName evidence="1">Diadenosine 5',5'''-P1,P4-tetraphosphate pyrophosphohydrolase</fullName>
    </alternativeName>
    <alternativeName>
        <fullName evidence="1">Diadenosine tetraphosphatase</fullName>
    </alternativeName>
</protein>
<dbReference type="EC" id="3.6.1.41" evidence="1"/>
<dbReference type="EMBL" id="CP000890">
    <property type="protein sequence ID" value="ABX77974.1"/>
    <property type="molecule type" value="Genomic_DNA"/>
</dbReference>
<dbReference type="RefSeq" id="WP_010958582.1">
    <property type="nucleotide sequence ID" value="NC_010117.1"/>
</dbReference>
<dbReference type="SMR" id="A9N9I1"/>
<dbReference type="KEGG" id="cbs:COXBURSA331_A0097"/>
<dbReference type="HOGENOM" id="CLU_056184_2_0_6"/>
<dbReference type="GO" id="GO:0008803">
    <property type="term" value="F:bis(5'-nucleosyl)-tetraphosphatase (symmetrical) activity"/>
    <property type="evidence" value="ECO:0007669"/>
    <property type="project" value="UniProtKB-UniRule"/>
</dbReference>
<dbReference type="CDD" id="cd07422">
    <property type="entry name" value="MPP_ApaH"/>
    <property type="match status" value="1"/>
</dbReference>
<dbReference type="Gene3D" id="3.60.21.10">
    <property type="match status" value="1"/>
</dbReference>
<dbReference type="HAMAP" id="MF_00199">
    <property type="entry name" value="ApaH"/>
    <property type="match status" value="1"/>
</dbReference>
<dbReference type="InterPro" id="IPR004617">
    <property type="entry name" value="ApaH"/>
</dbReference>
<dbReference type="InterPro" id="IPR004843">
    <property type="entry name" value="Calcineurin-like_PHP_ApaH"/>
</dbReference>
<dbReference type="InterPro" id="IPR029052">
    <property type="entry name" value="Metallo-depent_PP-like"/>
</dbReference>
<dbReference type="NCBIfam" id="TIGR00668">
    <property type="entry name" value="apaH"/>
    <property type="match status" value="1"/>
</dbReference>
<dbReference type="NCBIfam" id="NF001204">
    <property type="entry name" value="PRK00166.1"/>
    <property type="match status" value="1"/>
</dbReference>
<dbReference type="PANTHER" id="PTHR40942">
    <property type="match status" value="1"/>
</dbReference>
<dbReference type="PANTHER" id="PTHR40942:SF4">
    <property type="entry name" value="CYTOCHROME C5"/>
    <property type="match status" value="1"/>
</dbReference>
<dbReference type="Pfam" id="PF00149">
    <property type="entry name" value="Metallophos"/>
    <property type="match status" value="1"/>
</dbReference>
<dbReference type="PIRSF" id="PIRSF000903">
    <property type="entry name" value="B5n-ttraPtase_sm"/>
    <property type="match status" value="1"/>
</dbReference>
<dbReference type="SUPFAM" id="SSF56300">
    <property type="entry name" value="Metallo-dependent phosphatases"/>
    <property type="match status" value="1"/>
</dbReference>
<sequence length="291" mass="33300">MDARAINSREKADLKYPRNTYIIGDVQGCYRELQELLELIQFDSTKDRLGFVGDLVNRGPNSLEVLRFLKSLSSPLIVLGNHDLYLLILGYGLMPEDSYEHTLHAVLQAPDKLELLEWLRHSPLIRYEKSLSAVLVHAGLPPQWNIKESILHAEEISTALKGPHYLAFLKNLFGNEPSQWKEDLEGQDRLRYICNAFTRMRFCDAKGHLDLESEGKTNQAPSRFRPWFEWRNPQEDNVDIVFGHWAALNGQSSAPHTHALDTGCAWGYKLTAINLKTKERFSVPCQSALRM</sequence>
<evidence type="ECO:0000255" key="1">
    <source>
        <dbReference type="HAMAP-Rule" id="MF_00199"/>
    </source>
</evidence>
<organism>
    <name type="scientific">Coxiella burnetii (strain RSA 331 / Henzerling II)</name>
    <dbReference type="NCBI Taxonomy" id="360115"/>
    <lineage>
        <taxon>Bacteria</taxon>
        <taxon>Pseudomonadati</taxon>
        <taxon>Pseudomonadota</taxon>
        <taxon>Gammaproteobacteria</taxon>
        <taxon>Legionellales</taxon>
        <taxon>Coxiellaceae</taxon>
        <taxon>Coxiella</taxon>
    </lineage>
</organism>
<name>APAH_COXBR</name>
<keyword id="KW-0378">Hydrolase</keyword>
<feature type="chain" id="PRO_1000077713" description="Bis(5'-nucleosyl)-tetraphosphatase, symmetrical">
    <location>
        <begin position="1"/>
        <end position="291"/>
    </location>
</feature>
<comment type="function">
    <text evidence="1">Hydrolyzes diadenosine 5',5'''-P1,P4-tetraphosphate to yield ADP.</text>
</comment>
<comment type="catalytic activity">
    <reaction evidence="1">
        <text>P(1),P(4)-bis(5'-adenosyl) tetraphosphate + H2O = 2 ADP + 2 H(+)</text>
        <dbReference type="Rhea" id="RHEA:24252"/>
        <dbReference type="ChEBI" id="CHEBI:15377"/>
        <dbReference type="ChEBI" id="CHEBI:15378"/>
        <dbReference type="ChEBI" id="CHEBI:58141"/>
        <dbReference type="ChEBI" id="CHEBI:456216"/>
        <dbReference type="EC" id="3.6.1.41"/>
    </reaction>
</comment>
<comment type="similarity">
    <text evidence="1">Belongs to the Ap4A hydrolase family.</text>
</comment>